<name>RL31_ECO45</name>
<gene>
    <name evidence="1" type="primary">rpmE</name>
    <name type="ordered locus">ECS88_4386</name>
</gene>
<proteinExistence type="inferred from homology"/>
<comment type="function">
    <text evidence="1">Binds the 23S rRNA.</text>
</comment>
<comment type="cofactor">
    <cofactor evidence="1">
        <name>Zn(2+)</name>
        <dbReference type="ChEBI" id="CHEBI:29105"/>
    </cofactor>
    <text evidence="1">Binds 1 zinc ion per subunit.</text>
</comment>
<comment type="subunit">
    <text evidence="1">Part of the 50S ribosomal subunit.</text>
</comment>
<comment type="similarity">
    <text evidence="1">Belongs to the bacterial ribosomal protein bL31 family. Type A subfamily.</text>
</comment>
<accession>B7MI68</accession>
<feature type="chain" id="PRO_1000126613" description="Large ribosomal subunit protein bL31">
    <location>
        <begin position="1"/>
        <end position="70"/>
    </location>
</feature>
<feature type="binding site" evidence="1">
    <location>
        <position position="16"/>
    </location>
    <ligand>
        <name>Zn(2+)</name>
        <dbReference type="ChEBI" id="CHEBI:29105"/>
    </ligand>
</feature>
<feature type="binding site" evidence="1">
    <location>
        <position position="18"/>
    </location>
    <ligand>
        <name>Zn(2+)</name>
        <dbReference type="ChEBI" id="CHEBI:29105"/>
    </ligand>
</feature>
<feature type="binding site" evidence="1">
    <location>
        <position position="37"/>
    </location>
    <ligand>
        <name>Zn(2+)</name>
        <dbReference type="ChEBI" id="CHEBI:29105"/>
    </ligand>
</feature>
<feature type="binding site" evidence="1">
    <location>
        <position position="40"/>
    </location>
    <ligand>
        <name>Zn(2+)</name>
        <dbReference type="ChEBI" id="CHEBI:29105"/>
    </ligand>
</feature>
<feature type="modified residue" description="N6-acetyllysine" evidence="1">
    <location>
        <position position="8"/>
    </location>
</feature>
<evidence type="ECO:0000255" key="1">
    <source>
        <dbReference type="HAMAP-Rule" id="MF_00501"/>
    </source>
</evidence>
<evidence type="ECO:0000305" key="2"/>
<keyword id="KW-0007">Acetylation</keyword>
<keyword id="KW-0479">Metal-binding</keyword>
<keyword id="KW-1185">Reference proteome</keyword>
<keyword id="KW-0687">Ribonucleoprotein</keyword>
<keyword id="KW-0689">Ribosomal protein</keyword>
<keyword id="KW-0694">RNA-binding</keyword>
<keyword id="KW-0699">rRNA-binding</keyword>
<keyword id="KW-0862">Zinc</keyword>
<reference key="1">
    <citation type="journal article" date="2009" name="PLoS Genet.">
        <title>Organised genome dynamics in the Escherichia coli species results in highly diverse adaptive paths.</title>
        <authorList>
            <person name="Touchon M."/>
            <person name="Hoede C."/>
            <person name="Tenaillon O."/>
            <person name="Barbe V."/>
            <person name="Baeriswyl S."/>
            <person name="Bidet P."/>
            <person name="Bingen E."/>
            <person name="Bonacorsi S."/>
            <person name="Bouchier C."/>
            <person name="Bouvet O."/>
            <person name="Calteau A."/>
            <person name="Chiapello H."/>
            <person name="Clermont O."/>
            <person name="Cruveiller S."/>
            <person name="Danchin A."/>
            <person name="Diard M."/>
            <person name="Dossat C."/>
            <person name="Karoui M.E."/>
            <person name="Frapy E."/>
            <person name="Garry L."/>
            <person name="Ghigo J.M."/>
            <person name="Gilles A.M."/>
            <person name="Johnson J."/>
            <person name="Le Bouguenec C."/>
            <person name="Lescat M."/>
            <person name="Mangenot S."/>
            <person name="Martinez-Jehanne V."/>
            <person name="Matic I."/>
            <person name="Nassif X."/>
            <person name="Oztas S."/>
            <person name="Petit M.A."/>
            <person name="Pichon C."/>
            <person name="Rouy Z."/>
            <person name="Ruf C.S."/>
            <person name="Schneider D."/>
            <person name="Tourret J."/>
            <person name="Vacherie B."/>
            <person name="Vallenet D."/>
            <person name="Medigue C."/>
            <person name="Rocha E.P.C."/>
            <person name="Denamur E."/>
        </authorList>
    </citation>
    <scope>NUCLEOTIDE SEQUENCE [LARGE SCALE GENOMIC DNA]</scope>
    <source>
        <strain>S88 / ExPEC</strain>
    </source>
</reference>
<dbReference type="EMBL" id="CU928161">
    <property type="protein sequence ID" value="CAR05566.1"/>
    <property type="molecule type" value="Genomic_DNA"/>
</dbReference>
<dbReference type="RefSeq" id="WP_000710769.1">
    <property type="nucleotide sequence ID" value="NC_011742.1"/>
</dbReference>
<dbReference type="EMDB" id="EMD-7970"/>
<dbReference type="EMDB" id="EMD-8826"/>
<dbReference type="EMDB" id="EMD-8829"/>
<dbReference type="SMR" id="B7MI68"/>
<dbReference type="IntAct" id="B7MI68">
    <property type="interactions" value="1"/>
</dbReference>
<dbReference type="GeneID" id="93777962"/>
<dbReference type="KEGG" id="ecz:ECS88_4386"/>
<dbReference type="HOGENOM" id="CLU_114306_4_3_6"/>
<dbReference type="Proteomes" id="UP000000747">
    <property type="component" value="Chromosome"/>
</dbReference>
<dbReference type="GO" id="GO:1990904">
    <property type="term" value="C:ribonucleoprotein complex"/>
    <property type="evidence" value="ECO:0007669"/>
    <property type="project" value="UniProtKB-KW"/>
</dbReference>
<dbReference type="GO" id="GO:0005840">
    <property type="term" value="C:ribosome"/>
    <property type="evidence" value="ECO:0007669"/>
    <property type="project" value="UniProtKB-KW"/>
</dbReference>
<dbReference type="GO" id="GO:0046872">
    <property type="term" value="F:metal ion binding"/>
    <property type="evidence" value="ECO:0007669"/>
    <property type="project" value="UniProtKB-KW"/>
</dbReference>
<dbReference type="GO" id="GO:0019843">
    <property type="term" value="F:rRNA binding"/>
    <property type="evidence" value="ECO:0007669"/>
    <property type="project" value="UniProtKB-KW"/>
</dbReference>
<dbReference type="GO" id="GO:0003735">
    <property type="term" value="F:structural constituent of ribosome"/>
    <property type="evidence" value="ECO:0007669"/>
    <property type="project" value="InterPro"/>
</dbReference>
<dbReference type="GO" id="GO:0006412">
    <property type="term" value="P:translation"/>
    <property type="evidence" value="ECO:0007669"/>
    <property type="project" value="UniProtKB-UniRule"/>
</dbReference>
<dbReference type="FunFam" id="4.10.830.30:FF:000001">
    <property type="entry name" value="50S ribosomal protein L31"/>
    <property type="match status" value="1"/>
</dbReference>
<dbReference type="Gene3D" id="4.10.830.30">
    <property type="entry name" value="Ribosomal protein L31"/>
    <property type="match status" value="1"/>
</dbReference>
<dbReference type="HAMAP" id="MF_00501">
    <property type="entry name" value="Ribosomal_bL31_1"/>
    <property type="match status" value="1"/>
</dbReference>
<dbReference type="InterPro" id="IPR034704">
    <property type="entry name" value="Ribosomal_bL28/bL31-like_sf"/>
</dbReference>
<dbReference type="InterPro" id="IPR002150">
    <property type="entry name" value="Ribosomal_bL31"/>
</dbReference>
<dbReference type="InterPro" id="IPR027491">
    <property type="entry name" value="Ribosomal_bL31_A"/>
</dbReference>
<dbReference type="InterPro" id="IPR042105">
    <property type="entry name" value="Ribosomal_bL31_sf"/>
</dbReference>
<dbReference type="NCBIfam" id="TIGR00105">
    <property type="entry name" value="L31"/>
    <property type="match status" value="1"/>
</dbReference>
<dbReference type="NCBIfam" id="NF000612">
    <property type="entry name" value="PRK00019.1"/>
    <property type="match status" value="1"/>
</dbReference>
<dbReference type="NCBIfam" id="NF001809">
    <property type="entry name" value="PRK00528.1"/>
    <property type="match status" value="1"/>
</dbReference>
<dbReference type="PANTHER" id="PTHR33280">
    <property type="entry name" value="50S RIBOSOMAL PROTEIN L31, CHLOROPLASTIC"/>
    <property type="match status" value="1"/>
</dbReference>
<dbReference type="PANTHER" id="PTHR33280:SF6">
    <property type="entry name" value="LARGE RIBOSOMAL SUBUNIT PROTEIN BL31A"/>
    <property type="match status" value="1"/>
</dbReference>
<dbReference type="Pfam" id="PF01197">
    <property type="entry name" value="Ribosomal_L31"/>
    <property type="match status" value="1"/>
</dbReference>
<dbReference type="PRINTS" id="PR01249">
    <property type="entry name" value="RIBOSOMALL31"/>
</dbReference>
<dbReference type="SUPFAM" id="SSF143800">
    <property type="entry name" value="L28p-like"/>
    <property type="match status" value="1"/>
</dbReference>
<dbReference type="PROSITE" id="PS01143">
    <property type="entry name" value="RIBOSOMAL_L31"/>
    <property type="match status" value="1"/>
</dbReference>
<protein>
    <recommendedName>
        <fullName evidence="1">Large ribosomal subunit protein bL31</fullName>
    </recommendedName>
    <alternativeName>
        <fullName evidence="2">50S ribosomal protein L31</fullName>
    </alternativeName>
</protein>
<organism>
    <name type="scientific">Escherichia coli O45:K1 (strain S88 / ExPEC)</name>
    <dbReference type="NCBI Taxonomy" id="585035"/>
    <lineage>
        <taxon>Bacteria</taxon>
        <taxon>Pseudomonadati</taxon>
        <taxon>Pseudomonadota</taxon>
        <taxon>Gammaproteobacteria</taxon>
        <taxon>Enterobacterales</taxon>
        <taxon>Enterobacteriaceae</taxon>
        <taxon>Escherichia</taxon>
    </lineage>
</organism>
<sequence>MKKDIHPKYEEITASCSCGNVMKIRSTVGHDLNLDVCSKCHPFFTGKQRDVATGGRVDRFNKRFNIPGSK</sequence>